<comment type="function">
    <text evidence="1">Transfers a GMP moiety from GTP to Mo-molybdopterin (Mo-MPT) cofactor (Moco or molybdenum cofactor) to form Mo-molybdopterin guanine dinucleotide (Mo-MGD) cofactor.</text>
</comment>
<comment type="catalytic activity">
    <reaction evidence="1">
        <text>Mo-molybdopterin + GTP + H(+) = Mo-molybdopterin guanine dinucleotide + diphosphate</text>
        <dbReference type="Rhea" id="RHEA:34243"/>
        <dbReference type="ChEBI" id="CHEBI:15378"/>
        <dbReference type="ChEBI" id="CHEBI:33019"/>
        <dbReference type="ChEBI" id="CHEBI:37565"/>
        <dbReference type="ChEBI" id="CHEBI:71302"/>
        <dbReference type="ChEBI" id="CHEBI:71310"/>
        <dbReference type="EC" id="2.7.7.77"/>
    </reaction>
</comment>
<comment type="cofactor">
    <cofactor evidence="1">
        <name>Mg(2+)</name>
        <dbReference type="ChEBI" id="CHEBI:18420"/>
    </cofactor>
</comment>
<comment type="subcellular location">
    <subcellularLocation>
        <location evidence="1">Cytoplasm</location>
    </subcellularLocation>
</comment>
<comment type="domain">
    <text evidence="1">The N-terminal domain determines nucleotide recognition and specific binding, while the C-terminal domain determines the specific binding to the target protein.</text>
</comment>
<comment type="similarity">
    <text evidence="1">Belongs to the MobA family.</text>
</comment>
<keyword id="KW-0963">Cytoplasm</keyword>
<keyword id="KW-0342">GTP-binding</keyword>
<keyword id="KW-0460">Magnesium</keyword>
<keyword id="KW-0479">Metal-binding</keyword>
<keyword id="KW-0501">Molybdenum cofactor biosynthesis</keyword>
<keyword id="KW-0547">Nucleotide-binding</keyword>
<keyword id="KW-1185">Reference proteome</keyword>
<keyword id="KW-0808">Transferase</keyword>
<dbReference type="EC" id="2.7.7.77" evidence="1"/>
<dbReference type="EMBL" id="CP000611">
    <property type="protein sequence ID" value="ABQ74249.1"/>
    <property type="molecule type" value="Genomic_DNA"/>
</dbReference>
<dbReference type="RefSeq" id="WP_003412618.1">
    <property type="nucleotide sequence ID" value="NZ_CP016972.1"/>
</dbReference>
<dbReference type="SMR" id="A5U5E9"/>
<dbReference type="GeneID" id="45426443"/>
<dbReference type="KEGG" id="mra:MRA_2479"/>
<dbReference type="eggNOG" id="COG0746">
    <property type="taxonomic scope" value="Bacteria"/>
</dbReference>
<dbReference type="HOGENOM" id="CLU_055597_3_2_11"/>
<dbReference type="Proteomes" id="UP000001988">
    <property type="component" value="Chromosome"/>
</dbReference>
<dbReference type="GO" id="GO:0005737">
    <property type="term" value="C:cytoplasm"/>
    <property type="evidence" value="ECO:0007669"/>
    <property type="project" value="UniProtKB-SubCell"/>
</dbReference>
<dbReference type="GO" id="GO:0005525">
    <property type="term" value="F:GTP binding"/>
    <property type="evidence" value="ECO:0007669"/>
    <property type="project" value="UniProtKB-UniRule"/>
</dbReference>
<dbReference type="GO" id="GO:0046872">
    <property type="term" value="F:metal ion binding"/>
    <property type="evidence" value="ECO:0007669"/>
    <property type="project" value="UniProtKB-KW"/>
</dbReference>
<dbReference type="GO" id="GO:0061603">
    <property type="term" value="F:molybdenum cofactor guanylyltransferase activity"/>
    <property type="evidence" value="ECO:0007669"/>
    <property type="project" value="UniProtKB-EC"/>
</dbReference>
<dbReference type="GO" id="GO:0006777">
    <property type="term" value="P:Mo-molybdopterin cofactor biosynthetic process"/>
    <property type="evidence" value="ECO:0007669"/>
    <property type="project" value="UniProtKB-KW"/>
</dbReference>
<dbReference type="CDD" id="cd02503">
    <property type="entry name" value="MobA"/>
    <property type="match status" value="1"/>
</dbReference>
<dbReference type="Gene3D" id="3.90.550.10">
    <property type="entry name" value="Spore Coat Polysaccharide Biosynthesis Protein SpsA, Chain A"/>
    <property type="match status" value="1"/>
</dbReference>
<dbReference type="HAMAP" id="MF_00316">
    <property type="entry name" value="MobA"/>
    <property type="match status" value="1"/>
</dbReference>
<dbReference type="InterPro" id="IPR025877">
    <property type="entry name" value="MobA-like_NTP_Trfase"/>
</dbReference>
<dbReference type="InterPro" id="IPR013482">
    <property type="entry name" value="Molybde_CF_guanTrfase"/>
</dbReference>
<dbReference type="InterPro" id="IPR029044">
    <property type="entry name" value="Nucleotide-diphossugar_trans"/>
</dbReference>
<dbReference type="NCBIfam" id="NF001855">
    <property type="entry name" value="PRK00576.1"/>
    <property type="match status" value="1"/>
</dbReference>
<dbReference type="PANTHER" id="PTHR19136">
    <property type="entry name" value="MOLYBDENUM COFACTOR GUANYLYLTRANSFERASE"/>
    <property type="match status" value="1"/>
</dbReference>
<dbReference type="PANTHER" id="PTHR19136:SF81">
    <property type="entry name" value="MOLYBDENUM COFACTOR GUANYLYLTRANSFERASE"/>
    <property type="match status" value="1"/>
</dbReference>
<dbReference type="Pfam" id="PF12804">
    <property type="entry name" value="NTP_transf_3"/>
    <property type="match status" value="1"/>
</dbReference>
<dbReference type="SUPFAM" id="SSF53448">
    <property type="entry name" value="Nucleotide-diphospho-sugar transferases"/>
    <property type="match status" value="1"/>
</dbReference>
<protein>
    <recommendedName>
        <fullName evidence="1">Probable molybdenum cofactor guanylyltransferase</fullName>
        <shortName evidence="1">MoCo guanylyltransferase</shortName>
        <ecNumber evidence="1">2.7.7.77</ecNumber>
    </recommendedName>
    <alternativeName>
        <fullName evidence="1">GTP:molybdopterin guanylyltransferase</fullName>
    </alternativeName>
    <alternativeName>
        <fullName evidence="1">Mo-MPT guanylyltransferase</fullName>
    </alternativeName>
    <alternativeName>
        <fullName evidence="1">Molybdopterin guanylyltransferase</fullName>
    </alternativeName>
    <alternativeName>
        <fullName evidence="1">Molybdopterin-guanine dinucleotide synthase</fullName>
        <shortName evidence="1">MGD synthase</shortName>
    </alternativeName>
</protein>
<sequence>MAELAPDTVPLAGVVLAGGESRRMGRDKATLPLPGGTTTLVEHMVGILGQRCAPVFVMAAPGQPLPTLPVPVLRDELPGLGPLPATGRGLRAAAEAGVRLAFVCAVDMPYLTVELIEDLARRAVQTDAEVVLPWDGRNHYLAAVYRTDLADRVDTLVGAGERKMSALVDASDALRIVMADSRPLTNVNSAAGLHAPMQPGR</sequence>
<organism>
    <name type="scientific">Mycobacterium tuberculosis (strain ATCC 25177 / H37Ra)</name>
    <dbReference type="NCBI Taxonomy" id="419947"/>
    <lineage>
        <taxon>Bacteria</taxon>
        <taxon>Bacillati</taxon>
        <taxon>Actinomycetota</taxon>
        <taxon>Actinomycetes</taxon>
        <taxon>Mycobacteriales</taxon>
        <taxon>Mycobacteriaceae</taxon>
        <taxon>Mycobacterium</taxon>
        <taxon>Mycobacterium tuberculosis complex</taxon>
    </lineage>
</organism>
<gene>
    <name evidence="1" type="primary">mobA</name>
    <name type="ordered locus">MRA_2479</name>
</gene>
<feature type="chain" id="PRO_1000019125" description="Probable molybdenum cofactor guanylyltransferase">
    <location>
        <begin position="1"/>
        <end position="201"/>
    </location>
</feature>
<feature type="binding site" evidence="1">
    <location>
        <begin position="16"/>
        <end position="18"/>
    </location>
    <ligand>
        <name>GTP</name>
        <dbReference type="ChEBI" id="CHEBI:37565"/>
    </ligand>
</feature>
<feature type="binding site" evidence="1">
    <location>
        <position position="28"/>
    </location>
    <ligand>
        <name>GTP</name>
        <dbReference type="ChEBI" id="CHEBI:37565"/>
    </ligand>
</feature>
<feature type="binding site" evidence="1">
    <location>
        <position position="75"/>
    </location>
    <ligand>
        <name>GTP</name>
        <dbReference type="ChEBI" id="CHEBI:37565"/>
    </ligand>
</feature>
<feature type="binding site" evidence="1">
    <location>
        <position position="107"/>
    </location>
    <ligand>
        <name>GTP</name>
        <dbReference type="ChEBI" id="CHEBI:37565"/>
    </ligand>
</feature>
<feature type="binding site" evidence="1">
    <location>
        <position position="107"/>
    </location>
    <ligand>
        <name>Mg(2+)</name>
        <dbReference type="ChEBI" id="CHEBI:18420"/>
    </ligand>
</feature>
<accession>A5U5E9</accession>
<name>MOBA_MYCTA</name>
<reference key="1">
    <citation type="journal article" date="2008" name="PLoS ONE">
        <title>Genetic basis of virulence attenuation revealed by comparative genomic analysis of Mycobacterium tuberculosis strain H37Ra versus H37Rv.</title>
        <authorList>
            <person name="Zheng H."/>
            <person name="Lu L."/>
            <person name="Wang B."/>
            <person name="Pu S."/>
            <person name="Zhang X."/>
            <person name="Zhu G."/>
            <person name="Shi W."/>
            <person name="Zhang L."/>
            <person name="Wang H."/>
            <person name="Wang S."/>
            <person name="Zhao G."/>
            <person name="Zhang Y."/>
        </authorList>
    </citation>
    <scope>NUCLEOTIDE SEQUENCE [LARGE SCALE GENOMIC DNA]</scope>
    <source>
        <strain>ATCC 25177 / H37Ra</strain>
    </source>
</reference>
<proteinExistence type="inferred from homology"/>
<evidence type="ECO:0000255" key="1">
    <source>
        <dbReference type="HAMAP-Rule" id="MF_00316"/>
    </source>
</evidence>